<protein>
    <recommendedName>
        <fullName>Embryonic protein UVS.2</fullName>
        <ecNumber>3.4.24.-</ecNumber>
    </recommendedName>
</protein>
<dbReference type="EC" id="3.4.24.-"/>
<dbReference type="EMBL" id="D89632">
    <property type="protein sequence ID" value="BAA14003.1"/>
    <property type="molecule type" value="mRNA"/>
</dbReference>
<dbReference type="EMBL" id="M27162">
    <property type="protein sequence ID" value="AAA49980.1"/>
    <property type="molecule type" value="mRNA"/>
</dbReference>
<dbReference type="PIR" id="I51569">
    <property type="entry name" value="I51569"/>
</dbReference>
<dbReference type="RefSeq" id="NP_001081221.1">
    <property type="nucleotide sequence ID" value="NM_001087752.1"/>
</dbReference>
<dbReference type="SMR" id="P42664"/>
<dbReference type="MEROPS" id="M12.014"/>
<dbReference type="GeneID" id="397718"/>
<dbReference type="KEGG" id="xla:397718"/>
<dbReference type="AGR" id="Xenbase:XB-GENE-6252624"/>
<dbReference type="CTD" id="397718"/>
<dbReference type="Xenbase" id="XB-GENE-6252624">
    <property type="gene designation" value="astl3a.L"/>
</dbReference>
<dbReference type="OrthoDB" id="291007at2759"/>
<dbReference type="Proteomes" id="UP000186698">
    <property type="component" value="Chromosome 8L"/>
</dbReference>
<dbReference type="Bgee" id="397718">
    <property type="expression patterns" value="Expressed in neurula embryo and 1 other cell type or tissue"/>
</dbReference>
<dbReference type="GO" id="GO:0004222">
    <property type="term" value="F:metalloendopeptidase activity"/>
    <property type="evidence" value="ECO:0000318"/>
    <property type="project" value="GO_Central"/>
</dbReference>
<dbReference type="GO" id="GO:0008270">
    <property type="term" value="F:zinc ion binding"/>
    <property type="evidence" value="ECO:0007669"/>
    <property type="project" value="InterPro"/>
</dbReference>
<dbReference type="GO" id="GO:0006508">
    <property type="term" value="P:proteolysis"/>
    <property type="evidence" value="ECO:0007669"/>
    <property type="project" value="UniProtKB-KW"/>
</dbReference>
<dbReference type="CDD" id="cd00041">
    <property type="entry name" value="CUB"/>
    <property type="match status" value="2"/>
</dbReference>
<dbReference type="CDD" id="cd04283">
    <property type="entry name" value="ZnMc_hatching_enzyme"/>
    <property type="match status" value="1"/>
</dbReference>
<dbReference type="FunFam" id="2.60.120.290:FF:000013">
    <property type="entry name" value="Membrane frizzled-related protein"/>
    <property type="match status" value="2"/>
</dbReference>
<dbReference type="FunFam" id="3.40.390.10:FF:000040">
    <property type="entry name" value="Metalloendopeptidase"/>
    <property type="match status" value="1"/>
</dbReference>
<dbReference type="Gene3D" id="3.40.390.10">
    <property type="entry name" value="Collagenase (Catalytic Domain)"/>
    <property type="match status" value="1"/>
</dbReference>
<dbReference type="Gene3D" id="2.60.120.290">
    <property type="entry name" value="Spermadhesin, CUB domain"/>
    <property type="match status" value="2"/>
</dbReference>
<dbReference type="InterPro" id="IPR000859">
    <property type="entry name" value="CUB_dom"/>
</dbReference>
<dbReference type="InterPro" id="IPR017370">
    <property type="entry name" value="Hatching_enzyme_Uvs2-like"/>
</dbReference>
<dbReference type="InterPro" id="IPR024079">
    <property type="entry name" value="MetalloPept_cat_dom_sf"/>
</dbReference>
<dbReference type="InterPro" id="IPR001506">
    <property type="entry name" value="Peptidase_M12A"/>
</dbReference>
<dbReference type="InterPro" id="IPR006026">
    <property type="entry name" value="Peptidase_Metallo"/>
</dbReference>
<dbReference type="InterPro" id="IPR035914">
    <property type="entry name" value="Sperma_CUB_dom_sf"/>
</dbReference>
<dbReference type="InterPro" id="IPR034039">
    <property type="entry name" value="ZnMP_hatching_enz"/>
</dbReference>
<dbReference type="PANTHER" id="PTHR10127">
    <property type="entry name" value="DISCOIDIN, CUB, EGF, LAMININ , AND ZINC METALLOPROTEASE DOMAIN CONTAINING"/>
    <property type="match status" value="1"/>
</dbReference>
<dbReference type="PANTHER" id="PTHR10127:SF887">
    <property type="entry name" value="EMBRYONIC PROTEIN UVS.2"/>
    <property type="match status" value="1"/>
</dbReference>
<dbReference type="Pfam" id="PF01400">
    <property type="entry name" value="Astacin"/>
    <property type="match status" value="1"/>
</dbReference>
<dbReference type="Pfam" id="PF00431">
    <property type="entry name" value="CUB"/>
    <property type="match status" value="2"/>
</dbReference>
<dbReference type="PIRSF" id="PIRSF038057">
    <property type="entry name" value="Hatching_enzyme_Uvs2"/>
    <property type="match status" value="1"/>
</dbReference>
<dbReference type="PRINTS" id="PR00480">
    <property type="entry name" value="ASTACIN"/>
</dbReference>
<dbReference type="SMART" id="SM00042">
    <property type="entry name" value="CUB"/>
    <property type="match status" value="2"/>
</dbReference>
<dbReference type="SMART" id="SM00235">
    <property type="entry name" value="ZnMc"/>
    <property type="match status" value="1"/>
</dbReference>
<dbReference type="SUPFAM" id="SSF55486">
    <property type="entry name" value="Metalloproteases ('zincins'), catalytic domain"/>
    <property type="match status" value="1"/>
</dbReference>
<dbReference type="SUPFAM" id="SSF49854">
    <property type="entry name" value="Spermadhesin, CUB domain"/>
    <property type="match status" value="2"/>
</dbReference>
<dbReference type="PROSITE" id="PS51864">
    <property type="entry name" value="ASTACIN"/>
    <property type="match status" value="1"/>
</dbReference>
<dbReference type="PROSITE" id="PS01180">
    <property type="entry name" value="CUB"/>
    <property type="match status" value="2"/>
</dbReference>
<dbReference type="PROSITE" id="PS00142">
    <property type="entry name" value="ZINC_PROTEASE"/>
    <property type="match status" value="1"/>
</dbReference>
<organism>
    <name type="scientific">Xenopus laevis</name>
    <name type="common">African clawed frog</name>
    <dbReference type="NCBI Taxonomy" id="8355"/>
    <lineage>
        <taxon>Eukaryota</taxon>
        <taxon>Metazoa</taxon>
        <taxon>Chordata</taxon>
        <taxon>Craniata</taxon>
        <taxon>Vertebrata</taxon>
        <taxon>Euteleostomi</taxon>
        <taxon>Amphibia</taxon>
        <taxon>Batrachia</taxon>
        <taxon>Anura</taxon>
        <taxon>Pipoidea</taxon>
        <taxon>Pipidae</taxon>
        <taxon>Xenopodinae</taxon>
        <taxon>Xenopus</taxon>
        <taxon>Xenopus</taxon>
    </lineage>
</organism>
<evidence type="ECO:0000255" key="1"/>
<evidence type="ECO:0000255" key="2">
    <source>
        <dbReference type="PROSITE-ProRule" id="PRU00059"/>
    </source>
</evidence>
<evidence type="ECO:0000255" key="3">
    <source>
        <dbReference type="PROSITE-ProRule" id="PRU01211"/>
    </source>
</evidence>
<feature type="signal peptide" evidence="1">
    <location>
        <begin position="1"/>
        <end position="19"/>
    </location>
</feature>
<feature type="chain" id="PRO_0000028905" description="Embryonic protein UVS.2">
    <location>
        <begin position="20"/>
        <end position="514"/>
    </location>
</feature>
<feature type="domain" description="Peptidase M12A" evidence="3">
    <location>
        <begin position="90"/>
        <end position="286"/>
    </location>
</feature>
<feature type="domain" description="CUB 1" evidence="2">
    <location>
        <begin position="288"/>
        <end position="400"/>
    </location>
</feature>
<feature type="domain" description="CUB 2" evidence="2">
    <location>
        <begin position="402"/>
        <end position="513"/>
    </location>
</feature>
<feature type="active site" evidence="3">
    <location>
        <position position="187"/>
    </location>
</feature>
<feature type="binding site" evidence="3">
    <location>
        <position position="186"/>
    </location>
    <ligand>
        <name>Zn(2+)</name>
        <dbReference type="ChEBI" id="CHEBI:29105"/>
        <note>catalytic</note>
    </ligand>
</feature>
<feature type="binding site" evidence="3">
    <location>
        <position position="190"/>
    </location>
    <ligand>
        <name>Zn(2+)</name>
        <dbReference type="ChEBI" id="CHEBI:29105"/>
        <note>catalytic</note>
    </ligand>
</feature>
<feature type="binding site" evidence="3">
    <location>
        <position position="196"/>
    </location>
    <ligand>
        <name>Zn(2+)</name>
        <dbReference type="ChEBI" id="CHEBI:29105"/>
        <note>catalytic</note>
    </ligand>
</feature>
<feature type="glycosylation site" description="N-linked (GlcNAc...) asparagine" evidence="1">
    <location>
        <position position="112"/>
    </location>
</feature>
<feature type="glycosylation site" description="N-linked (GlcNAc...) asparagine" evidence="1">
    <location>
        <position position="199"/>
    </location>
</feature>
<feature type="glycosylation site" description="N-linked (GlcNAc...) asparagine" evidence="1">
    <location>
        <position position="421"/>
    </location>
</feature>
<feature type="glycosylation site" description="N-linked (GlcNAc...) asparagine" evidence="1">
    <location>
        <position position="427"/>
    </location>
</feature>
<feature type="glycosylation site" description="N-linked (GlcNAc...) asparagine" evidence="1">
    <location>
        <position position="464"/>
    </location>
</feature>
<feature type="disulfide bond" evidence="3">
    <location>
        <begin position="137"/>
        <end position="285"/>
    </location>
</feature>
<feature type="disulfide bond" evidence="3">
    <location>
        <begin position="158"/>
        <end position="178"/>
    </location>
</feature>
<feature type="disulfide bond" evidence="2">
    <location>
        <begin position="288"/>
        <end position="314"/>
    </location>
</feature>
<feature type="disulfide bond" evidence="2">
    <location>
        <begin position="340"/>
        <end position="363"/>
    </location>
</feature>
<feature type="disulfide bond" evidence="2">
    <location>
        <begin position="402"/>
        <end position="428"/>
    </location>
</feature>
<feature type="disulfide bond" evidence="2">
    <location>
        <begin position="455"/>
        <end position="475"/>
    </location>
</feature>
<sequence length="514" mass="56845">MDVKISAILLACIIQYAVSSPIQVFYSGAKILAEEDAMAKEDILKAIEKADPGSVKTQDSMDILSQILEANKGIKLQTQEGDIIQKQGRSAINDARFLWPKSADGIVPVPYNLSYSYNADQLALFKKAIQEFEALTCVRFVPWTTEVNFLNIMSNGGCGSLIGKNGGAQRLELDANGCMNMGIIQHELNHALGFYHEQNRSDRDDYVIIHTENIIPDFLKMFEKYNTNNLGIEYDYASVMHYSRYHYSINGDITIEPKPDPNVPIGQRDGLSILDISKINKLYECNVCSNLLPYSNGMMISANYPSAYPNNANCVWLIRTPSGQVTLQFQAFDIQSSSGCVSDYIKIYDGPTKAFPVLVNRACGTGLIPLQIASTNQMLVEFVSDRAVTGTGFKATYGSIQCGGAFYSSPKTFTSPNYPGNYTTNTNCTWTITAPAGFKVSLRITDFELEIGASCRYDYLNIYNSTLGAVMGPYCGPIDFHSAIVSKSNSMMITMNSDFSKQYKGFSATYTFVR</sequence>
<comment type="cofactor">
    <cofactor evidence="3">
        <name>Zn(2+)</name>
        <dbReference type="ChEBI" id="CHEBI:29105"/>
    </cofactor>
    <text evidence="3">Binds 1 zinc ion per subunit.</text>
</comment>
<comment type="developmental stage">
    <text>Exclusively in the anterior neural fold of neurula stage embryos. By the tailbud stage, the protein is localized in specialized cephalic ectoderm, in a region probably corresponding to the hatching gland.</text>
</comment>
<keyword id="KW-1015">Disulfide bond</keyword>
<keyword id="KW-0325">Glycoprotein</keyword>
<keyword id="KW-0378">Hydrolase</keyword>
<keyword id="KW-0479">Metal-binding</keyword>
<keyword id="KW-0482">Metalloprotease</keyword>
<keyword id="KW-0645">Protease</keyword>
<keyword id="KW-1185">Reference proteome</keyword>
<keyword id="KW-0677">Repeat</keyword>
<keyword id="KW-0732">Signal</keyword>
<keyword id="KW-0862">Zinc</keyword>
<reference key="1">
    <citation type="journal article" date="1997" name="Int. J. Dev. Biol.">
        <title>Molecular cloning of Xenopus hatching enzyme and its specific expression in hatching gland cells.</title>
        <authorList>
            <person name="Katagiri C."/>
            <person name="Maeda R."/>
            <person name="Yamashika C."/>
            <person name="Mita K."/>
            <person name="Sargent T.D."/>
            <person name="Yasumasu S."/>
        </authorList>
    </citation>
    <scope>NUCLEOTIDE SEQUENCE [MRNA]</scope>
</reference>
<reference key="2">
    <citation type="journal article" date="1990" name="Dev. Biol.">
        <title>Molecular approach to dorsoanterior development in Xenopus laevis.</title>
        <authorList>
            <person name="Sato S.M."/>
            <person name="Sargent T.D."/>
        </authorList>
    </citation>
    <scope>NUCLEOTIDE SEQUENCE [MRNA] OF 196-514</scope>
</reference>
<proteinExistence type="evidence at transcript level"/>
<name>UVS2_XENLA</name>
<accession>P42664</accession>